<keyword id="KW-0067">ATP-binding</keyword>
<keyword id="KW-0460">Magnesium</keyword>
<keyword id="KW-0547">Nucleotide-binding</keyword>
<keyword id="KW-1185">Reference proteome</keyword>
<keyword id="KW-0808">Transferase</keyword>
<keyword id="KW-0819">tRNA processing</keyword>
<name>MIAA1_BACTN</name>
<reference key="1">
    <citation type="journal article" date="2003" name="Science">
        <title>A genomic view of the human-Bacteroides thetaiotaomicron symbiosis.</title>
        <authorList>
            <person name="Xu J."/>
            <person name="Bjursell M.K."/>
            <person name="Himrod J."/>
            <person name="Deng S."/>
            <person name="Carmichael L.K."/>
            <person name="Chiang H.C."/>
            <person name="Hooper L.V."/>
            <person name="Gordon J.I."/>
        </authorList>
    </citation>
    <scope>NUCLEOTIDE SEQUENCE [LARGE SCALE GENOMIC DNA]</scope>
    <source>
        <strain>ATCC 29148 / DSM 2079 / JCM 5827 / CCUG 10774 / NCTC 10582 / VPI-5482 / E50</strain>
    </source>
</reference>
<protein>
    <recommendedName>
        <fullName evidence="1">tRNA dimethylallyltransferase 1</fullName>
        <ecNumber evidence="1">2.5.1.75</ecNumber>
    </recommendedName>
    <alternativeName>
        <fullName evidence="1">Dimethylallyl diphosphate:tRNA dimethylallyltransferase 1</fullName>
        <shortName evidence="1">DMAPP:tRNA dimethylallyltransferase 1</shortName>
        <shortName evidence="1">DMATase 1</shortName>
    </alternativeName>
    <alternativeName>
        <fullName evidence="1">Isopentenyl-diphosphate:tRNA isopentenyltransferase 1</fullName>
        <shortName evidence="1">IPP transferase 1</shortName>
        <shortName evidence="1">IPPT 1</shortName>
        <shortName evidence="1">IPTase 1</shortName>
    </alternativeName>
</protein>
<gene>
    <name evidence="1" type="primary">miaA1</name>
    <name type="ordered locus">BT_4203</name>
</gene>
<dbReference type="EC" id="2.5.1.75" evidence="1"/>
<dbReference type="EMBL" id="AE015928">
    <property type="protein sequence ID" value="AAO79308.1"/>
    <property type="molecule type" value="Genomic_DNA"/>
</dbReference>
<dbReference type="RefSeq" id="NP_813114.1">
    <property type="nucleotide sequence ID" value="NC_004663.1"/>
</dbReference>
<dbReference type="SMR" id="Q8A018"/>
<dbReference type="FunCoup" id="Q8A018">
    <property type="interactions" value="462"/>
</dbReference>
<dbReference type="STRING" id="226186.BT_4203"/>
<dbReference type="PaxDb" id="226186-BT_4203"/>
<dbReference type="EnsemblBacteria" id="AAO79308">
    <property type="protein sequence ID" value="AAO79308"/>
    <property type="gene ID" value="BT_4203"/>
</dbReference>
<dbReference type="KEGG" id="bth:BT_4203"/>
<dbReference type="PATRIC" id="fig|226186.12.peg.4270"/>
<dbReference type="eggNOG" id="COG0324">
    <property type="taxonomic scope" value="Bacteria"/>
</dbReference>
<dbReference type="HOGENOM" id="CLU_032616_0_1_10"/>
<dbReference type="InParanoid" id="Q8A018"/>
<dbReference type="OrthoDB" id="9776390at2"/>
<dbReference type="Proteomes" id="UP000001414">
    <property type="component" value="Chromosome"/>
</dbReference>
<dbReference type="GO" id="GO:0005524">
    <property type="term" value="F:ATP binding"/>
    <property type="evidence" value="ECO:0007669"/>
    <property type="project" value="UniProtKB-UniRule"/>
</dbReference>
<dbReference type="GO" id="GO:0052381">
    <property type="term" value="F:tRNA dimethylallyltransferase activity"/>
    <property type="evidence" value="ECO:0000318"/>
    <property type="project" value="GO_Central"/>
</dbReference>
<dbReference type="GO" id="GO:0006400">
    <property type="term" value="P:tRNA modification"/>
    <property type="evidence" value="ECO:0000318"/>
    <property type="project" value="GO_Central"/>
</dbReference>
<dbReference type="FunFam" id="1.10.20.140:FF:000008">
    <property type="entry name" value="tRNA dimethylallyltransferase"/>
    <property type="match status" value="1"/>
</dbReference>
<dbReference type="Gene3D" id="1.10.20.140">
    <property type="match status" value="1"/>
</dbReference>
<dbReference type="Gene3D" id="3.40.50.300">
    <property type="entry name" value="P-loop containing nucleotide triphosphate hydrolases"/>
    <property type="match status" value="1"/>
</dbReference>
<dbReference type="HAMAP" id="MF_00185">
    <property type="entry name" value="IPP_trans"/>
    <property type="match status" value="1"/>
</dbReference>
<dbReference type="InterPro" id="IPR039657">
    <property type="entry name" value="Dimethylallyltransferase"/>
</dbReference>
<dbReference type="InterPro" id="IPR018022">
    <property type="entry name" value="IPT"/>
</dbReference>
<dbReference type="InterPro" id="IPR027417">
    <property type="entry name" value="P-loop_NTPase"/>
</dbReference>
<dbReference type="NCBIfam" id="TIGR00174">
    <property type="entry name" value="miaA"/>
    <property type="match status" value="1"/>
</dbReference>
<dbReference type="PANTHER" id="PTHR11088">
    <property type="entry name" value="TRNA DIMETHYLALLYLTRANSFERASE"/>
    <property type="match status" value="1"/>
</dbReference>
<dbReference type="PANTHER" id="PTHR11088:SF60">
    <property type="entry name" value="TRNA DIMETHYLALLYLTRANSFERASE"/>
    <property type="match status" value="1"/>
</dbReference>
<dbReference type="Pfam" id="PF01715">
    <property type="entry name" value="IPPT"/>
    <property type="match status" value="1"/>
</dbReference>
<dbReference type="SUPFAM" id="SSF52540">
    <property type="entry name" value="P-loop containing nucleoside triphosphate hydrolases"/>
    <property type="match status" value="2"/>
</dbReference>
<organism>
    <name type="scientific">Bacteroides thetaiotaomicron (strain ATCC 29148 / DSM 2079 / JCM 5827 / CCUG 10774 / NCTC 10582 / VPI-5482 / E50)</name>
    <dbReference type="NCBI Taxonomy" id="226186"/>
    <lineage>
        <taxon>Bacteria</taxon>
        <taxon>Pseudomonadati</taxon>
        <taxon>Bacteroidota</taxon>
        <taxon>Bacteroidia</taxon>
        <taxon>Bacteroidales</taxon>
        <taxon>Bacteroidaceae</taxon>
        <taxon>Bacteroides</taxon>
    </lineage>
</organism>
<feature type="chain" id="PRO_0000163877" description="tRNA dimethylallyltransferase 1">
    <location>
        <begin position="1"/>
        <end position="308"/>
    </location>
</feature>
<feature type="region of interest" description="Interaction with substrate tRNA" evidence="1">
    <location>
        <begin position="34"/>
        <end position="37"/>
    </location>
</feature>
<feature type="binding site" evidence="1">
    <location>
        <begin position="9"/>
        <end position="16"/>
    </location>
    <ligand>
        <name>ATP</name>
        <dbReference type="ChEBI" id="CHEBI:30616"/>
    </ligand>
</feature>
<feature type="binding site" evidence="1">
    <location>
        <begin position="11"/>
        <end position="16"/>
    </location>
    <ligand>
        <name>substrate</name>
    </ligand>
</feature>
<feature type="site" description="Interaction with substrate tRNA" evidence="1">
    <location>
        <position position="100"/>
    </location>
</feature>
<feature type="site" description="Interaction with substrate tRNA" evidence="1">
    <location>
        <position position="122"/>
    </location>
</feature>
<evidence type="ECO:0000255" key="1">
    <source>
        <dbReference type="HAMAP-Rule" id="MF_00185"/>
    </source>
</evidence>
<sequence length="308" mass="36187">MPTLIVLIGPTGVGKTELSLRLAENFHTSIVSADSRQLYAELKIGTAAPTPDQLKRVPHYLVGTLHLTDYYSAAQYEQEAMEILHQLFTEHEVVVLTGGSMMYVDAICKGIDDIPTVDAETRQVMLQKYEEEGLEQLCAELRLLDPDYYRIVDLKNPKRVIHALEICYMTGKTYTSFRTQQKKERPFRILKIGLTRDREELYDRINRRVDQMMEEGLLDEVRSVLSYRHLNSLNTVGYKELFKYLDGEWELPFAIEKIKQNSRIYSRKQMTWFKRDEEIRWFHPEQETEILEYLRLQNLTHLPSLDTF</sequence>
<comment type="function">
    <text evidence="1">Catalyzes the transfer of a dimethylallyl group onto the adenine at position 37 in tRNAs that read codons beginning with uridine, leading to the formation of N6-(dimethylallyl)adenosine (i(6)A).</text>
</comment>
<comment type="catalytic activity">
    <reaction evidence="1">
        <text>adenosine(37) in tRNA + dimethylallyl diphosphate = N(6)-dimethylallyladenosine(37) in tRNA + diphosphate</text>
        <dbReference type="Rhea" id="RHEA:26482"/>
        <dbReference type="Rhea" id="RHEA-COMP:10162"/>
        <dbReference type="Rhea" id="RHEA-COMP:10375"/>
        <dbReference type="ChEBI" id="CHEBI:33019"/>
        <dbReference type="ChEBI" id="CHEBI:57623"/>
        <dbReference type="ChEBI" id="CHEBI:74411"/>
        <dbReference type="ChEBI" id="CHEBI:74415"/>
        <dbReference type="EC" id="2.5.1.75"/>
    </reaction>
</comment>
<comment type="cofactor">
    <cofactor evidence="1">
        <name>Mg(2+)</name>
        <dbReference type="ChEBI" id="CHEBI:18420"/>
    </cofactor>
</comment>
<comment type="subunit">
    <text evidence="1">Monomer.</text>
</comment>
<comment type="similarity">
    <text evidence="1">Belongs to the IPP transferase family.</text>
</comment>
<accession>Q8A018</accession>
<proteinExistence type="inferred from homology"/>